<reference key="1">
    <citation type="journal article" date="2004" name="Proc. Natl. Acad. Sci. U.S.A.">
        <title>Genomic analysis of Bacteroides fragilis reveals extensive DNA inversions regulating cell surface adaptation.</title>
        <authorList>
            <person name="Kuwahara T."/>
            <person name="Yamashita A."/>
            <person name="Hirakawa H."/>
            <person name="Nakayama H."/>
            <person name="Toh H."/>
            <person name="Okada N."/>
            <person name="Kuhara S."/>
            <person name="Hattori M."/>
            <person name="Hayashi T."/>
            <person name="Ohnishi Y."/>
        </authorList>
    </citation>
    <scope>NUCLEOTIDE SEQUENCE [LARGE SCALE GENOMIC DNA]</scope>
    <source>
        <strain>YCH46</strain>
    </source>
</reference>
<comment type="function">
    <text evidence="1">Catalyzes the reversible interconversion of serine and glycine with tetrahydrofolate (THF) serving as the one-carbon carrier. This reaction serves as the major source of one-carbon groups required for the biosynthesis of purines, thymidylate, methionine, and other important biomolecules. Also exhibits THF-independent aldolase activity toward beta-hydroxyamino acids, producing glycine and aldehydes, via a retro-aldol mechanism.</text>
</comment>
<comment type="catalytic activity">
    <reaction evidence="1">
        <text>(6R)-5,10-methylene-5,6,7,8-tetrahydrofolate + glycine + H2O = (6S)-5,6,7,8-tetrahydrofolate + L-serine</text>
        <dbReference type="Rhea" id="RHEA:15481"/>
        <dbReference type="ChEBI" id="CHEBI:15377"/>
        <dbReference type="ChEBI" id="CHEBI:15636"/>
        <dbReference type="ChEBI" id="CHEBI:33384"/>
        <dbReference type="ChEBI" id="CHEBI:57305"/>
        <dbReference type="ChEBI" id="CHEBI:57453"/>
        <dbReference type="EC" id="2.1.2.1"/>
    </reaction>
</comment>
<comment type="cofactor">
    <cofactor evidence="1">
        <name>pyridoxal 5'-phosphate</name>
        <dbReference type="ChEBI" id="CHEBI:597326"/>
    </cofactor>
</comment>
<comment type="pathway">
    <text evidence="1">One-carbon metabolism; tetrahydrofolate interconversion.</text>
</comment>
<comment type="pathway">
    <text evidence="1">Amino-acid biosynthesis; glycine biosynthesis; glycine from L-serine: step 1/1.</text>
</comment>
<comment type="subunit">
    <text evidence="1">Homodimer.</text>
</comment>
<comment type="subcellular location">
    <subcellularLocation>
        <location evidence="1">Cytoplasm</location>
    </subcellularLocation>
</comment>
<comment type="similarity">
    <text evidence="1">Belongs to the SHMT family.</text>
</comment>
<sequence length="426" mass="46858">MKRDDLIFDIIEKEHQRQLKGIELIASENFVSDQVMEAMGSCLTNKYAEGYPGKRYYGGCEVVDQSEQIAIDRLKEIFGAEWANVQPHSGAQANAAVFLAVLNPGDKFMGLNLAHGGHLSHGSLVNTSGIIYTPCEYNLKQETGRVDYDQMEEVALREKPKMIIGGGSAYSREWDYKRMREIADKVGAILMIDMAHPAGLIAAGLLDNPVKYAHIVTSTTHKTLRGPRGGVIMMGKDFPNPWGKKTPKGEIKMMSQLLDSAVFPGIQGGPLEHVIAAKAVAFGECLQPEYKEYQKQVQKNAAVLAQALIDRGFTIVSGGTDNHSMLVDLRSKYPTLTGKVAEKALVSADITVNKNMVPFDSRSAFQTSGIRLGTPAITTRGAKEDLMLEIAEMIETVLSNVENEEVIAQVRARVNKTMEKYPIFAY</sequence>
<accession>Q64U78</accession>
<evidence type="ECO:0000255" key="1">
    <source>
        <dbReference type="HAMAP-Rule" id="MF_00051"/>
    </source>
</evidence>
<keyword id="KW-0028">Amino-acid biosynthesis</keyword>
<keyword id="KW-0963">Cytoplasm</keyword>
<keyword id="KW-0554">One-carbon metabolism</keyword>
<keyword id="KW-0663">Pyridoxal phosphate</keyword>
<keyword id="KW-0808">Transferase</keyword>
<dbReference type="EC" id="2.1.2.1" evidence="1"/>
<dbReference type="EMBL" id="AP006841">
    <property type="protein sequence ID" value="BAD48951.1"/>
    <property type="molecule type" value="Genomic_DNA"/>
</dbReference>
<dbReference type="RefSeq" id="WP_005787540.1">
    <property type="nucleotide sequence ID" value="NC_006347.1"/>
</dbReference>
<dbReference type="RefSeq" id="YP_099485.1">
    <property type="nucleotide sequence ID" value="NC_006347.1"/>
</dbReference>
<dbReference type="SMR" id="Q64U78"/>
<dbReference type="STRING" id="295405.BF2204"/>
<dbReference type="GeneID" id="60365850"/>
<dbReference type="KEGG" id="bfr:BF2204"/>
<dbReference type="PATRIC" id="fig|295405.11.peg.2142"/>
<dbReference type="HOGENOM" id="CLU_022477_2_1_10"/>
<dbReference type="OrthoDB" id="9803846at2"/>
<dbReference type="UniPathway" id="UPA00193"/>
<dbReference type="UniPathway" id="UPA00288">
    <property type="reaction ID" value="UER01023"/>
</dbReference>
<dbReference type="Proteomes" id="UP000002197">
    <property type="component" value="Chromosome"/>
</dbReference>
<dbReference type="GO" id="GO:0005829">
    <property type="term" value="C:cytosol"/>
    <property type="evidence" value="ECO:0007669"/>
    <property type="project" value="TreeGrafter"/>
</dbReference>
<dbReference type="GO" id="GO:0004372">
    <property type="term" value="F:glycine hydroxymethyltransferase activity"/>
    <property type="evidence" value="ECO:0007669"/>
    <property type="project" value="UniProtKB-UniRule"/>
</dbReference>
<dbReference type="GO" id="GO:0030170">
    <property type="term" value="F:pyridoxal phosphate binding"/>
    <property type="evidence" value="ECO:0007669"/>
    <property type="project" value="UniProtKB-UniRule"/>
</dbReference>
<dbReference type="GO" id="GO:0019264">
    <property type="term" value="P:glycine biosynthetic process from serine"/>
    <property type="evidence" value="ECO:0007669"/>
    <property type="project" value="UniProtKB-UniRule"/>
</dbReference>
<dbReference type="GO" id="GO:0035999">
    <property type="term" value="P:tetrahydrofolate interconversion"/>
    <property type="evidence" value="ECO:0007669"/>
    <property type="project" value="UniProtKB-UniRule"/>
</dbReference>
<dbReference type="CDD" id="cd00378">
    <property type="entry name" value="SHMT"/>
    <property type="match status" value="1"/>
</dbReference>
<dbReference type="FunFam" id="3.40.640.10:FF:000001">
    <property type="entry name" value="Serine hydroxymethyltransferase"/>
    <property type="match status" value="1"/>
</dbReference>
<dbReference type="Gene3D" id="3.90.1150.10">
    <property type="entry name" value="Aspartate Aminotransferase, domain 1"/>
    <property type="match status" value="1"/>
</dbReference>
<dbReference type="Gene3D" id="3.40.640.10">
    <property type="entry name" value="Type I PLP-dependent aspartate aminotransferase-like (Major domain)"/>
    <property type="match status" value="1"/>
</dbReference>
<dbReference type="HAMAP" id="MF_00051">
    <property type="entry name" value="SHMT"/>
    <property type="match status" value="1"/>
</dbReference>
<dbReference type="InterPro" id="IPR015424">
    <property type="entry name" value="PyrdxlP-dep_Trfase"/>
</dbReference>
<dbReference type="InterPro" id="IPR015421">
    <property type="entry name" value="PyrdxlP-dep_Trfase_major"/>
</dbReference>
<dbReference type="InterPro" id="IPR015422">
    <property type="entry name" value="PyrdxlP-dep_Trfase_small"/>
</dbReference>
<dbReference type="InterPro" id="IPR001085">
    <property type="entry name" value="Ser_HO-MeTrfase"/>
</dbReference>
<dbReference type="InterPro" id="IPR049943">
    <property type="entry name" value="Ser_HO-MeTrfase-like"/>
</dbReference>
<dbReference type="InterPro" id="IPR019798">
    <property type="entry name" value="Ser_HO-MeTrfase_PLP_BS"/>
</dbReference>
<dbReference type="InterPro" id="IPR039429">
    <property type="entry name" value="SHMT-like_dom"/>
</dbReference>
<dbReference type="NCBIfam" id="NF000586">
    <property type="entry name" value="PRK00011.1"/>
    <property type="match status" value="1"/>
</dbReference>
<dbReference type="PANTHER" id="PTHR11680">
    <property type="entry name" value="SERINE HYDROXYMETHYLTRANSFERASE"/>
    <property type="match status" value="1"/>
</dbReference>
<dbReference type="PANTHER" id="PTHR11680:SF35">
    <property type="entry name" value="SERINE HYDROXYMETHYLTRANSFERASE 1"/>
    <property type="match status" value="1"/>
</dbReference>
<dbReference type="Pfam" id="PF00464">
    <property type="entry name" value="SHMT"/>
    <property type="match status" value="1"/>
</dbReference>
<dbReference type="PIRSF" id="PIRSF000412">
    <property type="entry name" value="SHMT"/>
    <property type="match status" value="1"/>
</dbReference>
<dbReference type="SUPFAM" id="SSF53383">
    <property type="entry name" value="PLP-dependent transferases"/>
    <property type="match status" value="1"/>
</dbReference>
<dbReference type="PROSITE" id="PS00096">
    <property type="entry name" value="SHMT"/>
    <property type="match status" value="1"/>
</dbReference>
<organism>
    <name type="scientific">Bacteroides fragilis (strain YCH46)</name>
    <dbReference type="NCBI Taxonomy" id="295405"/>
    <lineage>
        <taxon>Bacteria</taxon>
        <taxon>Pseudomonadati</taxon>
        <taxon>Bacteroidota</taxon>
        <taxon>Bacteroidia</taxon>
        <taxon>Bacteroidales</taxon>
        <taxon>Bacteroidaceae</taxon>
        <taxon>Bacteroides</taxon>
    </lineage>
</organism>
<gene>
    <name evidence="1" type="primary">glyA</name>
    <name type="ordered locus">BF2204</name>
</gene>
<feature type="chain" id="PRO_0000113528" description="Serine hydroxymethyltransferase">
    <location>
        <begin position="1"/>
        <end position="426"/>
    </location>
</feature>
<feature type="binding site" evidence="1">
    <location>
        <position position="113"/>
    </location>
    <ligand>
        <name>(6S)-5,6,7,8-tetrahydrofolate</name>
        <dbReference type="ChEBI" id="CHEBI:57453"/>
    </ligand>
</feature>
<feature type="binding site" evidence="1">
    <location>
        <begin position="117"/>
        <end position="119"/>
    </location>
    <ligand>
        <name>(6S)-5,6,7,8-tetrahydrofolate</name>
        <dbReference type="ChEBI" id="CHEBI:57453"/>
    </ligand>
</feature>
<feature type="binding site" evidence="1">
    <location>
        <begin position="363"/>
        <end position="365"/>
    </location>
    <ligand>
        <name>(6S)-5,6,7,8-tetrahydrofolate</name>
        <dbReference type="ChEBI" id="CHEBI:57453"/>
    </ligand>
</feature>
<feature type="site" description="Plays an important role in substrate specificity" evidence="1">
    <location>
        <position position="221"/>
    </location>
</feature>
<feature type="modified residue" description="N6-(pyridoxal phosphate)lysine" evidence="1">
    <location>
        <position position="222"/>
    </location>
</feature>
<protein>
    <recommendedName>
        <fullName evidence="1">Serine hydroxymethyltransferase</fullName>
        <shortName evidence="1">SHMT</shortName>
        <shortName evidence="1">Serine methylase</shortName>
        <ecNumber evidence="1">2.1.2.1</ecNumber>
    </recommendedName>
</protein>
<name>GLYA_BACFR</name>
<proteinExistence type="inferred from homology"/>